<organism>
    <name type="scientific">Legionella pneumophila (strain Lens)</name>
    <dbReference type="NCBI Taxonomy" id="297245"/>
    <lineage>
        <taxon>Bacteria</taxon>
        <taxon>Pseudomonadati</taxon>
        <taxon>Pseudomonadota</taxon>
        <taxon>Gammaproteobacteria</taxon>
        <taxon>Legionellales</taxon>
        <taxon>Legionellaceae</taxon>
        <taxon>Legionella</taxon>
    </lineage>
</organism>
<reference key="1">
    <citation type="journal article" date="2004" name="Nat. Genet.">
        <title>Evidence in the Legionella pneumophila genome for exploitation of host cell functions and high genome plasticity.</title>
        <authorList>
            <person name="Cazalet C."/>
            <person name="Rusniok C."/>
            <person name="Brueggemann H."/>
            <person name="Zidane N."/>
            <person name="Magnier A."/>
            <person name="Ma L."/>
            <person name="Tichit M."/>
            <person name="Jarraud S."/>
            <person name="Bouchier C."/>
            <person name="Vandenesch F."/>
            <person name="Kunst F."/>
            <person name="Etienne J."/>
            <person name="Glaser P."/>
            <person name="Buchrieser C."/>
        </authorList>
    </citation>
    <scope>NUCLEOTIDE SEQUENCE [LARGE SCALE GENOMIC DNA]</scope>
    <source>
        <strain>Lens</strain>
    </source>
</reference>
<protein>
    <recommendedName>
        <fullName evidence="1">Phosphoserine aminotransferase</fullName>
        <ecNumber evidence="1">2.6.1.52</ecNumber>
    </recommendedName>
    <alternativeName>
        <fullName evidence="1">Phosphohydroxythreonine aminotransferase</fullName>
        <shortName evidence="1">PSAT</shortName>
    </alternativeName>
</protein>
<comment type="function">
    <text evidence="1">Catalyzes the reversible conversion of 3-phosphohydroxypyruvate to phosphoserine and of 3-hydroxy-2-oxo-4-phosphonooxybutanoate to phosphohydroxythreonine.</text>
</comment>
<comment type="catalytic activity">
    <reaction evidence="1">
        <text>O-phospho-L-serine + 2-oxoglutarate = 3-phosphooxypyruvate + L-glutamate</text>
        <dbReference type="Rhea" id="RHEA:14329"/>
        <dbReference type="ChEBI" id="CHEBI:16810"/>
        <dbReference type="ChEBI" id="CHEBI:18110"/>
        <dbReference type="ChEBI" id="CHEBI:29985"/>
        <dbReference type="ChEBI" id="CHEBI:57524"/>
        <dbReference type="EC" id="2.6.1.52"/>
    </reaction>
</comment>
<comment type="catalytic activity">
    <reaction evidence="1">
        <text>4-(phosphooxy)-L-threonine + 2-oxoglutarate = (R)-3-hydroxy-2-oxo-4-phosphooxybutanoate + L-glutamate</text>
        <dbReference type="Rhea" id="RHEA:16573"/>
        <dbReference type="ChEBI" id="CHEBI:16810"/>
        <dbReference type="ChEBI" id="CHEBI:29985"/>
        <dbReference type="ChEBI" id="CHEBI:58452"/>
        <dbReference type="ChEBI" id="CHEBI:58538"/>
        <dbReference type="EC" id="2.6.1.52"/>
    </reaction>
</comment>
<comment type="cofactor">
    <cofactor evidence="1">
        <name>pyridoxal 5'-phosphate</name>
        <dbReference type="ChEBI" id="CHEBI:597326"/>
    </cofactor>
    <text evidence="1">Binds 1 pyridoxal phosphate per subunit.</text>
</comment>
<comment type="pathway">
    <text evidence="1">Amino-acid biosynthesis; L-serine biosynthesis; L-serine from 3-phospho-D-glycerate: step 2/3.</text>
</comment>
<comment type="pathway">
    <text evidence="1">Cofactor biosynthesis; pyridoxine 5'-phosphate biosynthesis; pyridoxine 5'-phosphate from D-erythrose 4-phosphate: step 3/5.</text>
</comment>
<comment type="subunit">
    <text evidence="1">Homodimer.</text>
</comment>
<comment type="subcellular location">
    <subcellularLocation>
        <location evidence="1">Cytoplasm</location>
    </subcellularLocation>
</comment>
<comment type="similarity">
    <text evidence="1">Belongs to the class-V pyridoxal-phosphate-dependent aminotransferase family. SerC subfamily.</text>
</comment>
<keyword id="KW-0028">Amino-acid biosynthesis</keyword>
<keyword id="KW-0032">Aminotransferase</keyword>
<keyword id="KW-0963">Cytoplasm</keyword>
<keyword id="KW-0663">Pyridoxal phosphate</keyword>
<keyword id="KW-0664">Pyridoxine biosynthesis</keyword>
<keyword id="KW-0718">Serine biosynthesis</keyword>
<keyword id="KW-0808">Transferase</keyword>
<gene>
    <name evidence="1" type="primary">serC</name>
    <name type="ordered locus">lpl1369</name>
</gene>
<proteinExistence type="inferred from homology"/>
<evidence type="ECO:0000255" key="1">
    <source>
        <dbReference type="HAMAP-Rule" id="MF_00160"/>
    </source>
</evidence>
<feature type="chain" id="PRO_0000150180" description="Phosphoserine aminotransferase">
    <location>
        <begin position="1"/>
        <end position="362"/>
    </location>
</feature>
<feature type="binding site" evidence="1">
    <location>
        <position position="43"/>
    </location>
    <ligand>
        <name>L-glutamate</name>
        <dbReference type="ChEBI" id="CHEBI:29985"/>
    </ligand>
</feature>
<feature type="binding site" evidence="1">
    <location>
        <begin position="77"/>
        <end position="78"/>
    </location>
    <ligand>
        <name>pyridoxal 5'-phosphate</name>
        <dbReference type="ChEBI" id="CHEBI:597326"/>
    </ligand>
</feature>
<feature type="binding site" evidence="1">
    <location>
        <position position="103"/>
    </location>
    <ligand>
        <name>pyridoxal 5'-phosphate</name>
        <dbReference type="ChEBI" id="CHEBI:597326"/>
    </ligand>
</feature>
<feature type="binding site" evidence="1">
    <location>
        <position position="153"/>
    </location>
    <ligand>
        <name>pyridoxal 5'-phosphate</name>
        <dbReference type="ChEBI" id="CHEBI:597326"/>
    </ligand>
</feature>
<feature type="binding site" evidence="1">
    <location>
        <position position="173"/>
    </location>
    <ligand>
        <name>pyridoxal 5'-phosphate</name>
        <dbReference type="ChEBI" id="CHEBI:597326"/>
    </ligand>
</feature>
<feature type="binding site" evidence="1">
    <location>
        <position position="196"/>
    </location>
    <ligand>
        <name>pyridoxal 5'-phosphate</name>
        <dbReference type="ChEBI" id="CHEBI:597326"/>
    </ligand>
</feature>
<feature type="modified residue" description="N6-(pyridoxal phosphate)lysine" evidence="1">
    <location>
        <position position="197"/>
    </location>
</feature>
<sequence>MNSRVFNFGAGPAMLPEEILKEAQEEFLNWRNTGMSILEIGHRTPEIISLLSTAEQSLRELLNIPKNYHVLFLGGAARTQFAMIPMNLLRPGDDAAYFITGIWSKMAYHEANLLKKAYYLSSEEKEGFVSIPDYQKWELKSNTAYVYYTPNETINGVRFPYVPKTGGVPLVADMTSCLLSEPININQYGLIFAGAQKNIANAGLTVVIIHEELLKNQPEPVIPTMLNYKNHAEHRSLYATPPVFNCYLASKMFEWIKTQGGIEGLFQRNCLKAAKLYQYLDSTDFYLTPVFKEARSIMNICFSLCYPDLEHKFLDMANERGLKALKGHRFTGGLRASLYNAMPMAGVDALIEFMSEFAKENG</sequence>
<dbReference type="EC" id="2.6.1.52" evidence="1"/>
<dbReference type="EMBL" id="CR628337">
    <property type="protein sequence ID" value="CAH15609.1"/>
    <property type="molecule type" value="Genomic_DNA"/>
</dbReference>
<dbReference type="RefSeq" id="WP_011215433.1">
    <property type="nucleotide sequence ID" value="NC_006369.1"/>
</dbReference>
<dbReference type="SMR" id="Q5WWT0"/>
<dbReference type="KEGG" id="lpf:lpl1369"/>
<dbReference type="LegioList" id="lpl1369"/>
<dbReference type="HOGENOM" id="CLU_034866_0_2_6"/>
<dbReference type="UniPathway" id="UPA00135">
    <property type="reaction ID" value="UER00197"/>
</dbReference>
<dbReference type="UniPathway" id="UPA00244">
    <property type="reaction ID" value="UER00311"/>
</dbReference>
<dbReference type="Proteomes" id="UP000002517">
    <property type="component" value="Chromosome"/>
</dbReference>
<dbReference type="GO" id="GO:0005737">
    <property type="term" value="C:cytoplasm"/>
    <property type="evidence" value="ECO:0007669"/>
    <property type="project" value="UniProtKB-SubCell"/>
</dbReference>
<dbReference type="GO" id="GO:0004648">
    <property type="term" value="F:O-phospho-L-serine:2-oxoglutarate aminotransferase activity"/>
    <property type="evidence" value="ECO:0007669"/>
    <property type="project" value="UniProtKB-UniRule"/>
</dbReference>
<dbReference type="GO" id="GO:0030170">
    <property type="term" value="F:pyridoxal phosphate binding"/>
    <property type="evidence" value="ECO:0007669"/>
    <property type="project" value="UniProtKB-UniRule"/>
</dbReference>
<dbReference type="GO" id="GO:0006564">
    <property type="term" value="P:L-serine biosynthetic process"/>
    <property type="evidence" value="ECO:0007669"/>
    <property type="project" value="UniProtKB-UniRule"/>
</dbReference>
<dbReference type="GO" id="GO:0008615">
    <property type="term" value="P:pyridoxine biosynthetic process"/>
    <property type="evidence" value="ECO:0007669"/>
    <property type="project" value="UniProtKB-UniRule"/>
</dbReference>
<dbReference type="FunFam" id="3.40.640.10:FF:000010">
    <property type="entry name" value="Phosphoserine aminotransferase"/>
    <property type="match status" value="1"/>
</dbReference>
<dbReference type="FunFam" id="3.90.1150.10:FF:000006">
    <property type="entry name" value="Phosphoserine aminotransferase"/>
    <property type="match status" value="1"/>
</dbReference>
<dbReference type="Gene3D" id="3.90.1150.10">
    <property type="entry name" value="Aspartate Aminotransferase, domain 1"/>
    <property type="match status" value="1"/>
</dbReference>
<dbReference type="Gene3D" id="3.40.640.10">
    <property type="entry name" value="Type I PLP-dependent aspartate aminotransferase-like (Major domain)"/>
    <property type="match status" value="1"/>
</dbReference>
<dbReference type="HAMAP" id="MF_00160">
    <property type="entry name" value="SerC_aminotrans_5"/>
    <property type="match status" value="1"/>
</dbReference>
<dbReference type="InterPro" id="IPR000192">
    <property type="entry name" value="Aminotrans_V_dom"/>
</dbReference>
<dbReference type="InterPro" id="IPR020578">
    <property type="entry name" value="Aminotrans_V_PyrdxlP_BS"/>
</dbReference>
<dbReference type="InterPro" id="IPR022278">
    <property type="entry name" value="Pser_aminoTfrase"/>
</dbReference>
<dbReference type="InterPro" id="IPR015424">
    <property type="entry name" value="PyrdxlP-dep_Trfase"/>
</dbReference>
<dbReference type="InterPro" id="IPR015421">
    <property type="entry name" value="PyrdxlP-dep_Trfase_major"/>
</dbReference>
<dbReference type="InterPro" id="IPR015422">
    <property type="entry name" value="PyrdxlP-dep_Trfase_small"/>
</dbReference>
<dbReference type="NCBIfam" id="NF003764">
    <property type="entry name" value="PRK05355.1"/>
    <property type="match status" value="1"/>
</dbReference>
<dbReference type="NCBIfam" id="TIGR01364">
    <property type="entry name" value="serC_1"/>
    <property type="match status" value="1"/>
</dbReference>
<dbReference type="PANTHER" id="PTHR43247">
    <property type="entry name" value="PHOSPHOSERINE AMINOTRANSFERASE"/>
    <property type="match status" value="1"/>
</dbReference>
<dbReference type="PANTHER" id="PTHR43247:SF1">
    <property type="entry name" value="PHOSPHOSERINE AMINOTRANSFERASE"/>
    <property type="match status" value="1"/>
</dbReference>
<dbReference type="Pfam" id="PF00266">
    <property type="entry name" value="Aminotran_5"/>
    <property type="match status" value="1"/>
</dbReference>
<dbReference type="PIRSF" id="PIRSF000525">
    <property type="entry name" value="SerC"/>
    <property type="match status" value="1"/>
</dbReference>
<dbReference type="SUPFAM" id="SSF53383">
    <property type="entry name" value="PLP-dependent transferases"/>
    <property type="match status" value="1"/>
</dbReference>
<dbReference type="PROSITE" id="PS00595">
    <property type="entry name" value="AA_TRANSFER_CLASS_5"/>
    <property type="match status" value="1"/>
</dbReference>
<accession>Q5WWT0</accession>
<name>SERC_LEGPL</name>